<keyword id="KW-0963">Cytoplasm</keyword>
<keyword id="KW-0460">Magnesium</keyword>
<keyword id="KW-0479">Metal-binding</keyword>
<keyword id="KW-0548">Nucleotidyltransferase</keyword>
<keyword id="KW-0694">RNA-binding</keyword>
<keyword id="KW-0808">Transferase</keyword>
<evidence type="ECO:0000255" key="1">
    <source>
        <dbReference type="HAMAP-Rule" id="MF_01595"/>
    </source>
</evidence>
<protein>
    <recommendedName>
        <fullName evidence="1">Polyribonucleotide nucleotidyltransferase</fullName>
        <ecNumber evidence="1">2.7.7.8</ecNumber>
    </recommendedName>
    <alternativeName>
        <fullName evidence="1">Polynucleotide phosphorylase</fullName>
        <shortName evidence="1">PNPase</shortName>
    </alternativeName>
</protein>
<gene>
    <name evidence="1" type="primary">pnp</name>
    <name type="ordered locus">CTA_0918</name>
</gene>
<dbReference type="EC" id="2.7.7.8" evidence="1"/>
<dbReference type="EMBL" id="CP000051">
    <property type="protein sequence ID" value="AAX51125.1"/>
    <property type="molecule type" value="Genomic_DNA"/>
</dbReference>
<dbReference type="RefSeq" id="WP_011324890.1">
    <property type="nucleotide sequence ID" value="NC_007429.1"/>
</dbReference>
<dbReference type="SMR" id="Q3KKJ7"/>
<dbReference type="KEGG" id="cta:CTA_0918"/>
<dbReference type="HOGENOM" id="CLU_004217_2_2_0"/>
<dbReference type="Proteomes" id="UP000002532">
    <property type="component" value="Chromosome"/>
</dbReference>
<dbReference type="GO" id="GO:0005829">
    <property type="term" value="C:cytosol"/>
    <property type="evidence" value="ECO:0007669"/>
    <property type="project" value="TreeGrafter"/>
</dbReference>
<dbReference type="GO" id="GO:0000175">
    <property type="term" value="F:3'-5'-RNA exonuclease activity"/>
    <property type="evidence" value="ECO:0007669"/>
    <property type="project" value="TreeGrafter"/>
</dbReference>
<dbReference type="GO" id="GO:0000287">
    <property type="term" value="F:magnesium ion binding"/>
    <property type="evidence" value="ECO:0007669"/>
    <property type="project" value="UniProtKB-UniRule"/>
</dbReference>
<dbReference type="GO" id="GO:0004654">
    <property type="term" value="F:polyribonucleotide nucleotidyltransferase activity"/>
    <property type="evidence" value="ECO:0007669"/>
    <property type="project" value="UniProtKB-UniRule"/>
</dbReference>
<dbReference type="GO" id="GO:0003723">
    <property type="term" value="F:RNA binding"/>
    <property type="evidence" value="ECO:0007669"/>
    <property type="project" value="UniProtKB-UniRule"/>
</dbReference>
<dbReference type="GO" id="GO:0006402">
    <property type="term" value="P:mRNA catabolic process"/>
    <property type="evidence" value="ECO:0007669"/>
    <property type="project" value="UniProtKB-UniRule"/>
</dbReference>
<dbReference type="GO" id="GO:0006396">
    <property type="term" value="P:RNA processing"/>
    <property type="evidence" value="ECO:0007669"/>
    <property type="project" value="InterPro"/>
</dbReference>
<dbReference type="CDD" id="cd02393">
    <property type="entry name" value="KH-I_PNPase"/>
    <property type="match status" value="1"/>
</dbReference>
<dbReference type="CDD" id="cd11363">
    <property type="entry name" value="RNase_PH_PNPase_1"/>
    <property type="match status" value="1"/>
</dbReference>
<dbReference type="CDD" id="cd11364">
    <property type="entry name" value="RNase_PH_PNPase_2"/>
    <property type="match status" value="1"/>
</dbReference>
<dbReference type="CDD" id="cd04472">
    <property type="entry name" value="S1_PNPase"/>
    <property type="match status" value="1"/>
</dbReference>
<dbReference type="FunFam" id="3.30.1370.10:FF:000001">
    <property type="entry name" value="Polyribonucleotide nucleotidyltransferase"/>
    <property type="match status" value="1"/>
</dbReference>
<dbReference type="FunFam" id="3.30.230.70:FF:000001">
    <property type="entry name" value="Polyribonucleotide nucleotidyltransferase"/>
    <property type="match status" value="1"/>
</dbReference>
<dbReference type="FunFam" id="3.30.230.70:FF:000049">
    <property type="entry name" value="Polyribonucleotide nucleotidyltransferase"/>
    <property type="match status" value="1"/>
</dbReference>
<dbReference type="FunFam" id="2.40.50.140:FF:000158">
    <property type="entry name" value="Polyribonucleotide nucleotidyltransferase 1, chloroplastic"/>
    <property type="match status" value="1"/>
</dbReference>
<dbReference type="Gene3D" id="3.30.230.70">
    <property type="entry name" value="GHMP Kinase, N-terminal domain"/>
    <property type="match status" value="2"/>
</dbReference>
<dbReference type="Gene3D" id="3.30.1370.10">
    <property type="entry name" value="K Homology domain, type 1"/>
    <property type="match status" value="1"/>
</dbReference>
<dbReference type="Gene3D" id="2.40.50.140">
    <property type="entry name" value="Nucleic acid-binding proteins"/>
    <property type="match status" value="1"/>
</dbReference>
<dbReference type="HAMAP" id="MF_01595">
    <property type="entry name" value="PNPase"/>
    <property type="match status" value="1"/>
</dbReference>
<dbReference type="InterPro" id="IPR001247">
    <property type="entry name" value="ExoRNase_PH_dom1"/>
</dbReference>
<dbReference type="InterPro" id="IPR015847">
    <property type="entry name" value="ExoRNase_PH_dom2"/>
</dbReference>
<dbReference type="InterPro" id="IPR036345">
    <property type="entry name" value="ExoRNase_PH_dom2_sf"/>
</dbReference>
<dbReference type="InterPro" id="IPR004087">
    <property type="entry name" value="KH_dom"/>
</dbReference>
<dbReference type="InterPro" id="IPR004088">
    <property type="entry name" value="KH_dom_type_1"/>
</dbReference>
<dbReference type="InterPro" id="IPR036612">
    <property type="entry name" value="KH_dom_type_1_sf"/>
</dbReference>
<dbReference type="InterPro" id="IPR012340">
    <property type="entry name" value="NA-bd_OB-fold"/>
</dbReference>
<dbReference type="InterPro" id="IPR012162">
    <property type="entry name" value="PNPase"/>
</dbReference>
<dbReference type="InterPro" id="IPR027408">
    <property type="entry name" value="PNPase/RNase_PH_dom_sf"/>
</dbReference>
<dbReference type="InterPro" id="IPR015848">
    <property type="entry name" value="PNPase_PH_RNA-bd_bac/org-type"/>
</dbReference>
<dbReference type="InterPro" id="IPR036456">
    <property type="entry name" value="PNPase_PH_RNA-bd_sf"/>
</dbReference>
<dbReference type="InterPro" id="IPR020568">
    <property type="entry name" value="Ribosomal_Su5_D2-typ_SF"/>
</dbReference>
<dbReference type="InterPro" id="IPR003029">
    <property type="entry name" value="S1_domain"/>
</dbReference>
<dbReference type="NCBIfam" id="TIGR03591">
    <property type="entry name" value="polynuc_phos"/>
    <property type="match status" value="1"/>
</dbReference>
<dbReference type="NCBIfam" id="NF008805">
    <property type="entry name" value="PRK11824.1"/>
    <property type="match status" value="1"/>
</dbReference>
<dbReference type="PANTHER" id="PTHR11252">
    <property type="entry name" value="POLYRIBONUCLEOTIDE NUCLEOTIDYLTRANSFERASE"/>
    <property type="match status" value="1"/>
</dbReference>
<dbReference type="PANTHER" id="PTHR11252:SF0">
    <property type="entry name" value="POLYRIBONUCLEOTIDE NUCLEOTIDYLTRANSFERASE 1, MITOCHONDRIAL"/>
    <property type="match status" value="1"/>
</dbReference>
<dbReference type="Pfam" id="PF00013">
    <property type="entry name" value="KH_1"/>
    <property type="match status" value="1"/>
</dbReference>
<dbReference type="Pfam" id="PF03726">
    <property type="entry name" value="PNPase"/>
    <property type="match status" value="1"/>
</dbReference>
<dbReference type="Pfam" id="PF01138">
    <property type="entry name" value="RNase_PH"/>
    <property type="match status" value="2"/>
</dbReference>
<dbReference type="Pfam" id="PF03725">
    <property type="entry name" value="RNase_PH_C"/>
    <property type="match status" value="2"/>
</dbReference>
<dbReference type="Pfam" id="PF00575">
    <property type="entry name" value="S1"/>
    <property type="match status" value="1"/>
</dbReference>
<dbReference type="PIRSF" id="PIRSF005499">
    <property type="entry name" value="PNPase"/>
    <property type="match status" value="1"/>
</dbReference>
<dbReference type="SMART" id="SM00322">
    <property type="entry name" value="KH"/>
    <property type="match status" value="1"/>
</dbReference>
<dbReference type="SMART" id="SM00316">
    <property type="entry name" value="S1"/>
    <property type="match status" value="1"/>
</dbReference>
<dbReference type="SUPFAM" id="SSF54791">
    <property type="entry name" value="Eukaryotic type KH-domain (KH-domain type I)"/>
    <property type="match status" value="1"/>
</dbReference>
<dbReference type="SUPFAM" id="SSF50249">
    <property type="entry name" value="Nucleic acid-binding proteins"/>
    <property type="match status" value="1"/>
</dbReference>
<dbReference type="SUPFAM" id="SSF46915">
    <property type="entry name" value="Polynucleotide phosphorylase/guanosine pentaphosphate synthase (PNPase/GPSI), domain 3"/>
    <property type="match status" value="1"/>
</dbReference>
<dbReference type="SUPFAM" id="SSF55666">
    <property type="entry name" value="Ribonuclease PH domain 2-like"/>
    <property type="match status" value="2"/>
</dbReference>
<dbReference type="SUPFAM" id="SSF54211">
    <property type="entry name" value="Ribosomal protein S5 domain 2-like"/>
    <property type="match status" value="2"/>
</dbReference>
<dbReference type="PROSITE" id="PS50084">
    <property type="entry name" value="KH_TYPE_1"/>
    <property type="match status" value="1"/>
</dbReference>
<dbReference type="PROSITE" id="PS50126">
    <property type="entry name" value="S1"/>
    <property type="match status" value="1"/>
</dbReference>
<accession>Q3KKJ7</accession>
<organism>
    <name type="scientific">Chlamydia trachomatis serovar A (strain ATCC VR-571B / DSM 19440 / HAR-13)</name>
    <dbReference type="NCBI Taxonomy" id="315277"/>
    <lineage>
        <taxon>Bacteria</taxon>
        <taxon>Pseudomonadati</taxon>
        <taxon>Chlamydiota</taxon>
        <taxon>Chlamydiia</taxon>
        <taxon>Chlamydiales</taxon>
        <taxon>Chlamydiaceae</taxon>
        <taxon>Chlamydia/Chlamydophila group</taxon>
        <taxon>Chlamydia</taxon>
    </lineage>
</organism>
<reference key="1">
    <citation type="journal article" date="2005" name="Infect. Immun.">
        <title>Comparative genomic analysis of Chlamydia trachomatis oculotropic and genitotropic strains.</title>
        <authorList>
            <person name="Carlson J.H."/>
            <person name="Porcella S.F."/>
            <person name="McClarty G."/>
            <person name="Caldwell H.D."/>
        </authorList>
    </citation>
    <scope>NUCLEOTIDE SEQUENCE [LARGE SCALE GENOMIC DNA]</scope>
    <source>
        <strain>ATCC VR-571B / DSM 19440 / HAR-13</strain>
    </source>
</reference>
<name>PNP_CHLTA</name>
<feature type="chain" id="PRO_0000329581" description="Polyribonucleotide nucleotidyltransferase">
    <location>
        <begin position="1"/>
        <end position="695"/>
    </location>
</feature>
<feature type="domain" description="KH" evidence="1">
    <location>
        <begin position="553"/>
        <end position="612"/>
    </location>
</feature>
<feature type="domain" description="S1 motif" evidence="1">
    <location>
        <begin position="622"/>
        <end position="690"/>
    </location>
</feature>
<feature type="binding site" evidence="1">
    <location>
        <position position="486"/>
    </location>
    <ligand>
        <name>Mg(2+)</name>
        <dbReference type="ChEBI" id="CHEBI:18420"/>
    </ligand>
</feature>
<feature type="binding site" evidence="1">
    <location>
        <position position="492"/>
    </location>
    <ligand>
        <name>Mg(2+)</name>
        <dbReference type="ChEBI" id="CHEBI:18420"/>
    </ligand>
</feature>
<proteinExistence type="inferred from homology"/>
<sequence length="695" mass="75497">MAFETFSVALDKDKTLIFETGKIARQASGAILVKMNETWVFSSACAASLSEAVDFLPFRVDYQEKFSSAGRTSGGFLKREGRPSEREILVSRLIDRSLRPSFPNRLMQDIQVLSYVWSYDGKTLPDPLAICGASAALAISEVPQNCIIAGVRVGLVGGKWVINPTRDELSASKLDLVMAGTASAVLMIEGHCDFLTEEQVLEAIAFGQTYIAKICDAIEAWQKATGKQKNFSAVLDMPEDVQNVVSDFIREKFEKALSFRDKEALEQASKELEESVIANLVQEENSDFSLLNVKAAFKTAKSNQMRALIQDLGIRVDGRTTTEIRPISIETPFLPRTHGSCLFTRGETQSMAVCTLGGENMAQRFEDLNGDGAARFYLQYFFPPFSVGEVGRIGSPGRREIGHGKLAEKALSHVLPETSRFPYIIRLESNITESNGSSSMASVCGGCLALMDAGVPIKAPVAGIAMGLILDRDQAIILSDISGIEDHLGDMDFKVAGTAKGITAFQMDIKIEGITHKIMEQALAQAKQGRSHILNLMTQVLASPKGTVSKYAPRIETMQINTSKIATVIGPGGKQIRQIIERSGAQVDINDDGVINIAASTQESINKAKELIEGLTGEVEVGKVYNGRVTSIATFGVFVEVLPGKEGLCHISELSKQKVDNISDFVKEGDKLAVKLLSINEKGQLKLSHKATLED</sequence>
<comment type="function">
    <text evidence="1">Involved in mRNA degradation. Catalyzes the phosphorolysis of single-stranded polyribonucleotides processively in the 3'- to 5'-direction.</text>
</comment>
<comment type="catalytic activity">
    <reaction evidence="1">
        <text>RNA(n+1) + phosphate = RNA(n) + a ribonucleoside 5'-diphosphate</text>
        <dbReference type="Rhea" id="RHEA:22096"/>
        <dbReference type="Rhea" id="RHEA-COMP:14527"/>
        <dbReference type="Rhea" id="RHEA-COMP:17342"/>
        <dbReference type="ChEBI" id="CHEBI:43474"/>
        <dbReference type="ChEBI" id="CHEBI:57930"/>
        <dbReference type="ChEBI" id="CHEBI:140395"/>
        <dbReference type="EC" id="2.7.7.8"/>
    </reaction>
</comment>
<comment type="cofactor">
    <cofactor evidence="1">
        <name>Mg(2+)</name>
        <dbReference type="ChEBI" id="CHEBI:18420"/>
    </cofactor>
</comment>
<comment type="subcellular location">
    <subcellularLocation>
        <location evidence="1">Cytoplasm</location>
    </subcellularLocation>
</comment>
<comment type="similarity">
    <text evidence="1">Belongs to the polyribonucleotide nucleotidyltransferase family.</text>
</comment>